<reference key="1">
    <citation type="journal article" date="2009" name="PLoS Genet.">
        <title>Organised genome dynamics in the Escherichia coli species results in highly diverse adaptive paths.</title>
        <authorList>
            <person name="Touchon M."/>
            <person name="Hoede C."/>
            <person name="Tenaillon O."/>
            <person name="Barbe V."/>
            <person name="Baeriswyl S."/>
            <person name="Bidet P."/>
            <person name="Bingen E."/>
            <person name="Bonacorsi S."/>
            <person name="Bouchier C."/>
            <person name="Bouvet O."/>
            <person name="Calteau A."/>
            <person name="Chiapello H."/>
            <person name="Clermont O."/>
            <person name="Cruveiller S."/>
            <person name="Danchin A."/>
            <person name="Diard M."/>
            <person name="Dossat C."/>
            <person name="Karoui M.E."/>
            <person name="Frapy E."/>
            <person name="Garry L."/>
            <person name="Ghigo J.M."/>
            <person name="Gilles A.M."/>
            <person name="Johnson J."/>
            <person name="Le Bouguenec C."/>
            <person name="Lescat M."/>
            <person name="Mangenot S."/>
            <person name="Martinez-Jehanne V."/>
            <person name="Matic I."/>
            <person name="Nassif X."/>
            <person name="Oztas S."/>
            <person name="Petit M.A."/>
            <person name="Pichon C."/>
            <person name="Rouy Z."/>
            <person name="Ruf C.S."/>
            <person name="Schneider D."/>
            <person name="Tourret J."/>
            <person name="Vacherie B."/>
            <person name="Vallenet D."/>
            <person name="Medigue C."/>
            <person name="Rocha E.P.C."/>
            <person name="Denamur E."/>
        </authorList>
    </citation>
    <scope>NUCLEOTIDE SEQUENCE [LARGE SCALE GENOMIC DNA]</scope>
    <source>
        <strain>IAI1</strain>
    </source>
</reference>
<evidence type="ECO:0000255" key="1">
    <source>
        <dbReference type="HAMAP-Rule" id="MF_00364"/>
    </source>
</evidence>
<proteinExistence type="inferred from homology"/>
<gene>
    <name evidence="1" type="primary">nagZ</name>
    <name type="ordered locus">ECIAI1_1144</name>
</gene>
<feature type="chain" id="PRO_1000121056" description="Beta-hexosaminidase">
    <location>
        <begin position="1"/>
        <end position="341"/>
    </location>
</feature>
<feature type="active site" description="Proton donor/acceptor" evidence="1">
    <location>
        <position position="176"/>
    </location>
</feature>
<feature type="active site" description="Nucleophile" evidence="1">
    <location>
        <position position="248"/>
    </location>
</feature>
<feature type="binding site" evidence="1">
    <location>
        <position position="62"/>
    </location>
    <ligand>
        <name>substrate</name>
    </ligand>
</feature>
<feature type="binding site" evidence="1">
    <location>
        <position position="70"/>
    </location>
    <ligand>
        <name>substrate</name>
    </ligand>
</feature>
<feature type="binding site" evidence="1">
    <location>
        <position position="133"/>
    </location>
    <ligand>
        <name>substrate</name>
    </ligand>
</feature>
<feature type="binding site" evidence="1">
    <location>
        <begin position="163"/>
        <end position="164"/>
    </location>
    <ligand>
        <name>substrate</name>
    </ligand>
</feature>
<feature type="site" description="Important for catalytic activity" evidence="1">
    <location>
        <position position="174"/>
    </location>
</feature>
<sequence length="341" mass="37575">MGPVMLDVKGYELDAEEREILAHPLVGGLILFTRNYHDPAQLRELVRQIRAASRNHLVVAVDQEGGRVQRFREGFTRLPAAQSFAALSGMEEGGKLAQEAGWLMASEMIAMDIDISFAPVLDVGHISAAIGERSYHADPQKALAIASRFIDGMHEAGMKTTGKHFPGHGAVTADSHKETPCDPRPQAEIRAKDMSVFSSLIRENKLDAIMPAHVIYSDVDPRPASGSPYWLKTVLRQELGFDGVIFSDDLSMEGAAIMGSYAERGQASLDAGCDMILVCNNRKGAVSVLDNLSPIKAERVTRLYHKGSFSRQELMDSARWKAISTRLNQLHERWQEEKAGH</sequence>
<comment type="function">
    <text evidence="1">Plays a role in peptidoglycan recycling by cleaving the terminal beta-1,4-linked N-acetylglucosamine (GlcNAc) from peptide-linked peptidoglycan fragments, giving rise to free GlcNAc, anhydro-N-acetylmuramic acid and anhydro-N-acetylmuramic acid-linked peptides.</text>
</comment>
<comment type="catalytic activity">
    <reaction evidence="1">
        <text>Hydrolysis of terminal non-reducing N-acetyl-D-hexosamine residues in N-acetyl-beta-D-hexosaminides.</text>
        <dbReference type="EC" id="3.2.1.52"/>
    </reaction>
</comment>
<comment type="pathway">
    <text evidence="1">Cell wall biogenesis; peptidoglycan recycling.</text>
</comment>
<comment type="subcellular location">
    <subcellularLocation>
        <location evidence="1">Cytoplasm</location>
    </subcellularLocation>
</comment>
<comment type="similarity">
    <text evidence="1">Belongs to the glycosyl hydrolase 3 family. NagZ subfamily.</text>
</comment>
<dbReference type="EC" id="3.2.1.52" evidence="1"/>
<dbReference type="EMBL" id="CU928160">
    <property type="protein sequence ID" value="CAQ98006.1"/>
    <property type="molecule type" value="Genomic_DNA"/>
</dbReference>
<dbReference type="RefSeq" id="WP_000529331.1">
    <property type="nucleotide sequence ID" value="NC_011741.1"/>
</dbReference>
<dbReference type="SMR" id="B7LX41"/>
<dbReference type="CAZy" id="GH3">
    <property type="family name" value="Glycoside Hydrolase Family 3"/>
</dbReference>
<dbReference type="KEGG" id="ecr:ECIAI1_1144"/>
<dbReference type="HOGENOM" id="CLU_008392_0_0_6"/>
<dbReference type="UniPathway" id="UPA00544"/>
<dbReference type="GO" id="GO:0005737">
    <property type="term" value="C:cytoplasm"/>
    <property type="evidence" value="ECO:0007669"/>
    <property type="project" value="UniProtKB-SubCell"/>
</dbReference>
<dbReference type="GO" id="GO:0004563">
    <property type="term" value="F:beta-N-acetylhexosaminidase activity"/>
    <property type="evidence" value="ECO:0007669"/>
    <property type="project" value="UniProtKB-UniRule"/>
</dbReference>
<dbReference type="GO" id="GO:0005975">
    <property type="term" value="P:carbohydrate metabolic process"/>
    <property type="evidence" value="ECO:0007669"/>
    <property type="project" value="InterPro"/>
</dbReference>
<dbReference type="GO" id="GO:0051301">
    <property type="term" value="P:cell division"/>
    <property type="evidence" value="ECO:0007669"/>
    <property type="project" value="UniProtKB-KW"/>
</dbReference>
<dbReference type="GO" id="GO:0071555">
    <property type="term" value="P:cell wall organization"/>
    <property type="evidence" value="ECO:0007669"/>
    <property type="project" value="UniProtKB-KW"/>
</dbReference>
<dbReference type="GO" id="GO:0009252">
    <property type="term" value="P:peptidoglycan biosynthetic process"/>
    <property type="evidence" value="ECO:0007669"/>
    <property type="project" value="UniProtKB-KW"/>
</dbReference>
<dbReference type="GO" id="GO:0009254">
    <property type="term" value="P:peptidoglycan turnover"/>
    <property type="evidence" value="ECO:0007669"/>
    <property type="project" value="UniProtKB-UniRule"/>
</dbReference>
<dbReference type="GO" id="GO:0008360">
    <property type="term" value="P:regulation of cell shape"/>
    <property type="evidence" value="ECO:0007669"/>
    <property type="project" value="UniProtKB-KW"/>
</dbReference>
<dbReference type="FunFam" id="3.20.20.300:FF:000001">
    <property type="entry name" value="Beta-hexosaminidase"/>
    <property type="match status" value="1"/>
</dbReference>
<dbReference type="Gene3D" id="3.20.20.300">
    <property type="entry name" value="Glycoside hydrolase, family 3, N-terminal domain"/>
    <property type="match status" value="1"/>
</dbReference>
<dbReference type="HAMAP" id="MF_00364">
    <property type="entry name" value="NagZ"/>
    <property type="match status" value="1"/>
</dbReference>
<dbReference type="InterPro" id="IPR022956">
    <property type="entry name" value="Beta_hexosaminidase_bac"/>
</dbReference>
<dbReference type="InterPro" id="IPR019800">
    <property type="entry name" value="Glyco_hydro_3_AS"/>
</dbReference>
<dbReference type="InterPro" id="IPR001764">
    <property type="entry name" value="Glyco_hydro_3_N"/>
</dbReference>
<dbReference type="InterPro" id="IPR036962">
    <property type="entry name" value="Glyco_hydro_3_N_sf"/>
</dbReference>
<dbReference type="InterPro" id="IPR017853">
    <property type="entry name" value="Glycoside_hydrolase_SF"/>
</dbReference>
<dbReference type="InterPro" id="IPR050226">
    <property type="entry name" value="NagZ_Beta-hexosaminidase"/>
</dbReference>
<dbReference type="NCBIfam" id="NF003740">
    <property type="entry name" value="PRK05337.1"/>
    <property type="match status" value="1"/>
</dbReference>
<dbReference type="PANTHER" id="PTHR30480:SF13">
    <property type="entry name" value="BETA-HEXOSAMINIDASE"/>
    <property type="match status" value="1"/>
</dbReference>
<dbReference type="PANTHER" id="PTHR30480">
    <property type="entry name" value="BETA-HEXOSAMINIDASE-RELATED"/>
    <property type="match status" value="1"/>
</dbReference>
<dbReference type="Pfam" id="PF00933">
    <property type="entry name" value="Glyco_hydro_3"/>
    <property type="match status" value="1"/>
</dbReference>
<dbReference type="SUPFAM" id="SSF51445">
    <property type="entry name" value="(Trans)glycosidases"/>
    <property type="match status" value="1"/>
</dbReference>
<dbReference type="PROSITE" id="PS00775">
    <property type="entry name" value="GLYCOSYL_HYDROL_F3"/>
    <property type="match status" value="1"/>
</dbReference>
<name>NAGZ_ECO8A</name>
<accession>B7LX41</accession>
<keyword id="KW-0131">Cell cycle</keyword>
<keyword id="KW-0132">Cell division</keyword>
<keyword id="KW-0133">Cell shape</keyword>
<keyword id="KW-0961">Cell wall biogenesis/degradation</keyword>
<keyword id="KW-0963">Cytoplasm</keyword>
<keyword id="KW-0326">Glycosidase</keyword>
<keyword id="KW-0378">Hydrolase</keyword>
<keyword id="KW-0573">Peptidoglycan synthesis</keyword>
<organism>
    <name type="scientific">Escherichia coli O8 (strain IAI1)</name>
    <dbReference type="NCBI Taxonomy" id="585034"/>
    <lineage>
        <taxon>Bacteria</taxon>
        <taxon>Pseudomonadati</taxon>
        <taxon>Pseudomonadota</taxon>
        <taxon>Gammaproteobacteria</taxon>
        <taxon>Enterobacterales</taxon>
        <taxon>Enterobacteriaceae</taxon>
        <taxon>Escherichia</taxon>
    </lineage>
</organism>
<protein>
    <recommendedName>
        <fullName evidence="1">Beta-hexosaminidase</fullName>
        <ecNumber evidence="1">3.2.1.52</ecNumber>
    </recommendedName>
    <alternativeName>
        <fullName evidence="1">Beta-N-acetylhexosaminidase</fullName>
    </alternativeName>
    <alternativeName>
        <fullName evidence="1">N-acetyl-beta-glucosaminidase</fullName>
    </alternativeName>
</protein>